<evidence type="ECO:0000255" key="1">
    <source>
        <dbReference type="HAMAP-Rule" id="MF_01398"/>
    </source>
</evidence>
<sequence>MTDILTNIFTILSRMSLAEGFGFNTDIFETNILNLAVVLGILLTSGREFFVSLLQNRQQNILQSINDADERYKEAAEKLQQAQNEFEQAKLEADQILAQSKKTASEIEVGLMNLIKEDTKKLLDMKQATISFEEEKAISEIRRQVIRLALQRALEQSKSRLNRRLQKRVTRLNIGLLGRLVTPNDV</sequence>
<proteinExistence type="inferred from homology"/>
<name>ATPF_MESVI</name>
<protein>
    <recommendedName>
        <fullName evidence="1">ATP synthase subunit b, chloroplastic</fullName>
    </recommendedName>
    <alternativeName>
        <fullName evidence="1">ATP synthase F(0) sector subunit b</fullName>
    </alternativeName>
    <alternativeName>
        <fullName evidence="1">ATPase subunit I</fullName>
    </alternativeName>
</protein>
<dbReference type="EMBL" id="AF166114">
    <property type="protein sequence ID" value="AAF43820.1"/>
    <property type="molecule type" value="Genomic_DNA"/>
</dbReference>
<dbReference type="RefSeq" id="NP_038379.1">
    <property type="nucleotide sequence ID" value="NC_002186.1"/>
</dbReference>
<dbReference type="SMR" id="Q9MUT1"/>
<dbReference type="GeneID" id="800997"/>
<dbReference type="GO" id="GO:0009535">
    <property type="term" value="C:chloroplast thylakoid membrane"/>
    <property type="evidence" value="ECO:0007669"/>
    <property type="project" value="UniProtKB-SubCell"/>
</dbReference>
<dbReference type="GO" id="GO:0045259">
    <property type="term" value="C:proton-transporting ATP synthase complex"/>
    <property type="evidence" value="ECO:0007669"/>
    <property type="project" value="UniProtKB-KW"/>
</dbReference>
<dbReference type="GO" id="GO:0005524">
    <property type="term" value="F:ATP binding"/>
    <property type="evidence" value="ECO:0007669"/>
    <property type="project" value="UniProtKB-KW"/>
</dbReference>
<dbReference type="GO" id="GO:0046933">
    <property type="term" value="F:proton-transporting ATP synthase activity, rotational mechanism"/>
    <property type="evidence" value="ECO:0007669"/>
    <property type="project" value="UniProtKB-UniRule"/>
</dbReference>
<dbReference type="CDD" id="cd06503">
    <property type="entry name" value="ATP-synt_Fo_b"/>
    <property type="match status" value="1"/>
</dbReference>
<dbReference type="HAMAP" id="MF_01398">
    <property type="entry name" value="ATP_synth_b_bprime"/>
    <property type="match status" value="1"/>
</dbReference>
<dbReference type="InterPro" id="IPR002146">
    <property type="entry name" value="ATP_synth_b/b'su_bac/chlpt"/>
</dbReference>
<dbReference type="PANTHER" id="PTHR34264">
    <property type="entry name" value="ATP SYNTHASE SUBUNIT B, CHLOROPLASTIC"/>
    <property type="match status" value="1"/>
</dbReference>
<dbReference type="PANTHER" id="PTHR34264:SF3">
    <property type="entry name" value="ATP SYNTHASE SUBUNIT B, CHLOROPLASTIC"/>
    <property type="match status" value="1"/>
</dbReference>
<dbReference type="Pfam" id="PF00430">
    <property type="entry name" value="ATP-synt_B"/>
    <property type="match status" value="1"/>
</dbReference>
<accession>Q9MUT1</accession>
<comment type="function">
    <text evidence="1">F(1)F(0) ATP synthase produces ATP from ADP in the presence of a proton or sodium gradient. F-type ATPases consist of two structural domains, F(1) containing the extramembraneous catalytic core and F(0) containing the membrane proton channel, linked together by a central stalk and a peripheral stalk. During catalysis, ATP synthesis in the catalytic domain of F(1) is coupled via a rotary mechanism of the central stalk subunits to proton translocation.</text>
</comment>
<comment type="function">
    <text evidence="1">Component of the F(0) channel, it forms part of the peripheral stalk, linking F(1) to F(0).</text>
</comment>
<comment type="subunit">
    <text evidence="1">F-type ATPases have 2 components, F(1) - the catalytic core - and F(0) - the membrane proton channel. F(1) has five subunits: alpha(3), beta(3), gamma(1), delta(1), epsilon(1). F(0) has four main subunits: a(1), b(1), b'(1) and c(10-14). The alpha and beta chains form an alternating ring which encloses part of the gamma chain. F(1) is attached to F(0) by a central stalk formed by the gamma and epsilon chains, while a peripheral stalk is formed by the delta, b and b' chains.</text>
</comment>
<comment type="subcellular location">
    <subcellularLocation>
        <location evidence="1">Plastid</location>
        <location evidence="1">Chloroplast thylakoid membrane</location>
        <topology evidence="1">Single-pass membrane protein</topology>
    </subcellularLocation>
</comment>
<comment type="miscellaneous">
    <text>In plastids the F-type ATPase is also known as CF(1)CF(0).</text>
</comment>
<comment type="similarity">
    <text evidence="1">Belongs to the ATPase B chain family.</text>
</comment>
<organism>
    <name type="scientific">Mesostigma viride</name>
    <name type="common">Green alga</name>
    <dbReference type="NCBI Taxonomy" id="41882"/>
    <lineage>
        <taxon>Eukaryota</taxon>
        <taxon>Viridiplantae</taxon>
        <taxon>Streptophyta</taxon>
        <taxon>Mesostigmatophyceae</taxon>
        <taxon>Mesostigmatales</taxon>
        <taxon>Mesostigmataceae</taxon>
        <taxon>Mesostigma</taxon>
    </lineage>
</organism>
<gene>
    <name evidence="1" type="primary">atpF</name>
</gene>
<feature type="chain" id="PRO_0000082413" description="ATP synthase subunit b, chloroplastic">
    <location>
        <begin position="1"/>
        <end position="186"/>
    </location>
</feature>
<feature type="transmembrane region" description="Helical" evidence="1">
    <location>
        <begin position="27"/>
        <end position="43"/>
    </location>
</feature>
<geneLocation type="chloroplast"/>
<reference key="1">
    <citation type="journal article" date="2000" name="Nature">
        <title>Ancestral chloroplast genome in Mesostigma viride reveals an early branch of green plant evolution.</title>
        <authorList>
            <person name="Lemieux C."/>
            <person name="Otis C."/>
            <person name="Turmel M."/>
        </authorList>
    </citation>
    <scope>NUCLEOTIDE SEQUENCE [LARGE SCALE GENOMIC DNA]</scope>
    <source>
        <strain>NIES-296 / KY-14 / CCMP 2046</strain>
    </source>
</reference>
<keyword id="KW-0066">ATP synthesis</keyword>
<keyword id="KW-0067">ATP-binding</keyword>
<keyword id="KW-0138">CF(0)</keyword>
<keyword id="KW-0150">Chloroplast</keyword>
<keyword id="KW-0375">Hydrogen ion transport</keyword>
<keyword id="KW-0406">Ion transport</keyword>
<keyword id="KW-0472">Membrane</keyword>
<keyword id="KW-0547">Nucleotide-binding</keyword>
<keyword id="KW-0934">Plastid</keyword>
<keyword id="KW-0793">Thylakoid</keyword>
<keyword id="KW-0812">Transmembrane</keyword>
<keyword id="KW-1133">Transmembrane helix</keyword>
<keyword id="KW-0813">Transport</keyword>